<dbReference type="EC" id="3.1.13.-" evidence="1"/>
<dbReference type="EC" id="3.1.3.97" evidence="1"/>
<dbReference type="EMBL" id="U92714">
    <property type="protein sequence ID" value="AAB93886.1"/>
    <property type="status" value="ALT_INIT"/>
    <property type="molecule type" value="Genomic_DNA"/>
</dbReference>
<dbReference type="EMBL" id="AE006468">
    <property type="protein sequence ID" value="AAL20639.1"/>
    <property type="molecule type" value="Genomic_DNA"/>
</dbReference>
<dbReference type="RefSeq" id="NP_460680.1">
    <property type="nucleotide sequence ID" value="NC_003197.2"/>
</dbReference>
<dbReference type="RefSeq" id="WP_000500442.1">
    <property type="nucleotide sequence ID" value="NC_003197.2"/>
</dbReference>
<dbReference type="SMR" id="O54453"/>
<dbReference type="STRING" id="99287.STM1721"/>
<dbReference type="PaxDb" id="99287-STM1721"/>
<dbReference type="DNASU" id="1253240"/>
<dbReference type="GeneID" id="1253240"/>
<dbReference type="KEGG" id="stm:STM1721"/>
<dbReference type="PATRIC" id="fig|99287.12.peg.1818"/>
<dbReference type="HOGENOM" id="CLU_067347_0_0_6"/>
<dbReference type="OMA" id="CTWGGAT"/>
<dbReference type="PhylomeDB" id="O54453"/>
<dbReference type="BioCyc" id="SENT99287:STM1721-MONOMER"/>
<dbReference type="Proteomes" id="UP000001014">
    <property type="component" value="Chromosome"/>
</dbReference>
<dbReference type="GO" id="GO:0097657">
    <property type="term" value="F:3',5'-nucleotide bisphosphate phosphatase activity"/>
    <property type="evidence" value="ECO:0007669"/>
    <property type="project" value="UniProtKB-EC"/>
</dbReference>
<dbReference type="GO" id="GO:0035312">
    <property type="term" value="F:5'-3' DNA exonuclease activity"/>
    <property type="evidence" value="ECO:0000318"/>
    <property type="project" value="GO_Central"/>
</dbReference>
<dbReference type="GO" id="GO:0004534">
    <property type="term" value="F:5'-3' RNA exonuclease activity"/>
    <property type="evidence" value="ECO:0000318"/>
    <property type="project" value="GO_Central"/>
</dbReference>
<dbReference type="GO" id="GO:0046872">
    <property type="term" value="F:metal ion binding"/>
    <property type="evidence" value="ECO:0007669"/>
    <property type="project" value="UniProtKB-KW"/>
</dbReference>
<dbReference type="GO" id="GO:0000166">
    <property type="term" value="F:nucleotide binding"/>
    <property type="evidence" value="ECO:0007669"/>
    <property type="project" value="UniProtKB-KW"/>
</dbReference>
<dbReference type="GO" id="GO:0006364">
    <property type="term" value="P:rRNA processing"/>
    <property type="evidence" value="ECO:0007669"/>
    <property type="project" value="UniProtKB-KW"/>
</dbReference>
<dbReference type="CDD" id="cd07438">
    <property type="entry name" value="PHP_HisPPase_AMP"/>
    <property type="match status" value="1"/>
</dbReference>
<dbReference type="FunFam" id="1.10.150.650:FF:000001">
    <property type="entry name" value="PHP domain protein"/>
    <property type="match status" value="1"/>
</dbReference>
<dbReference type="Gene3D" id="1.10.150.650">
    <property type="match status" value="1"/>
</dbReference>
<dbReference type="Gene3D" id="3.20.20.140">
    <property type="entry name" value="Metal-dependent hydrolases"/>
    <property type="match status" value="1"/>
</dbReference>
<dbReference type="InterPro" id="IPR004013">
    <property type="entry name" value="PHP_dom"/>
</dbReference>
<dbReference type="InterPro" id="IPR052018">
    <property type="entry name" value="PHP_domain"/>
</dbReference>
<dbReference type="InterPro" id="IPR003141">
    <property type="entry name" value="Pol/His_phosphatase_N"/>
</dbReference>
<dbReference type="InterPro" id="IPR016195">
    <property type="entry name" value="Pol/histidinol_Pase-like"/>
</dbReference>
<dbReference type="NCBIfam" id="NF047791">
    <property type="entry name" value="RNaseRnm"/>
    <property type="match status" value="1"/>
</dbReference>
<dbReference type="PANTHER" id="PTHR42924">
    <property type="entry name" value="EXONUCLEASE"/>
    <property type="match status" value="1"/>
</dbReference>
<dbReference type="PANTHER" id="PTHR42924:SF3">
    <property type="entry name" value="POLYMERASE_HISTIDINOL PHOSPHATASE N-TERMINAL DOMAIN-CONTAINING PROTEIN"/>
    <property type="match status" value="1"/>
</dbReference>
<dbReference type="Pfam" id="PF02811">
    <property type="entry name" value="PHP"/>
    <property type="match status" value="1"/>
</dbReference>
<dbReference type="SMART" id="SM00481">
    <property type="entry name" value="POLIIIAc"/>
    <property type="match status" value="1"/>
</dbReference>
<dbReference type="SUPFAM" id="SSF89550">
    <property type="entry name" value="PHP domain-like"/>
    <property type="match status" value="1"/>
</dbReference>
<organism>
    <name type="scientific">Salmonella typhimurium (strain LT2 / SGSC1412 / ATCC 700720)</name>
    <dbReference type="NCBI Taxonomy" id="99287"/>
    <lineage>
        <taxon>Bacteria</taxon>
        <taxon>Pseudomonadati</taxon>
        <taxon>Pseudomonadota</taxon>
        <taxon>Gammaproteobacteria</taxon>
        <taxon>Enterobacterales</taxon>
        <taxon>Enterobacteriaceae</taxon>
        <taxon>Salmonella</taxon>
    </lineage>
</organism>
<proteinExistence type="inferred from homology"/>
<reference key="1">
    <citation type="submission" date="1997-03" db="EMBL/GenBank/DDBJ databases">
        <title>The 5'-upstream regions of the trp operons of Escherichia coli and Salmonella typhimurium contain divergently oriented, TrpR-controlled transcriptional units.</title>
        <authorList>
            <person name="Yang W."/>
            <person name="Bai Q."/>
            <person name="Skrypka I."/>
            <person name="Zhao G."/>
            <person name="Somerville R.L."/>
        </authorList>
    </citation>
    <scope>NUCLEOTIDE SEQUENCE [GENOMIC DNA]</scope>
</reference>
<reference key="2">
    <citation type="journal article" date="2001" name="Nature">
        <title>Complete genome sequence of Salmonella enterica serovar Typhimurium LT2.</title>
        <authorList>
            <person name="McClelland M."/>
            <person name="Sanderson K.E."/>
            <person name="Spieth J."/>
            <person name="Clifton S.W."/>
            <person name="Latreille P."/>
            <person name="Courtney L."/>
            <person name="Porwollik S."/>
            <person name="Ali J."/>
            <person name="Dante M."/>
            <person name="Du F."/>
            <person name="Hou S."/>
            <person name="Layman D."/>
            <person name="Leonard S."/>
            <person name="Nguyen C."/>
            <person name="Scott K."/>
            <person name="Holmes A."/>
            <person name="Grewal N."/>
            <person name="Mulvaney E."/>
            <person name="Ryan E."/>
            <person name="Sun H."/>
            <person name="Florea L."/>
            <person name="Miller W."/>
            <person name="Stoneking T."/>
            <person name="Nhan M."/>
            <person name="Waterston R."/>
            <person name="Wilson R.K."/>
        </authorList>
    </citation>
    <scope>NUCLEOTIDE SEQUENCE [LARGE SCALE GENOMIC DNA]</scope>
    <source>
        <strain>LT2 / SGSC1412 / ATCC 700720</strain>
    </source>
</reference>
<accession>O54453</accession>
<gene>
    <name evidence="1" type="primary">rnm</name>
    <name evidence="4" type="synonym">trpH</name>
    <name evidence="5" type="ordered locus">STM1721</name>
</gene>
<name>RNM_SALTY</name>
<sequence>MGAALSDTNYAVIYDLHSHTTASDGLLTPETLVHRAVEMRVGTLAITDHDTTAAIPAAREEISRSGLALNLIPGVEISTVWENHEIHIVGLNIDIAHPAMRDFLAQQTERRQARGRLIAERLEKAHIPGAWEGALRLANGGAVTRGHFARFLVECGKAATMADVFKKYLARGKTGYVPPQWCTIEQAIDVIHHSGGKAVLAHPGRYDLSAKWLKRLVAHFADHHGDAMEVAQCQQSPNERTQLATLARQHHLWASLGSDFHQPCPWIELGRKLWLPAGVEGVWQTWEQPQISQ</sequence>
<evidence type="ECO:0000250" key="1">
    <source>
        <dbReference type="UniProtKB" id="P77766"/>
    </source>
</evidence>
<evidence type="ECO:0000250" key="2">
    <source>
        <dbReference type="UniProtKB" id="Q7NXD4"/>
    </source>
</evidence>
<evidence type="ECO:0000305" key="3"/>
<evidence type="ECO:0000312" key="4">
    <source>
        <dbReference type="EMBL" id="AAB93886.1"/>
    </source>
</evidence>
<evidence type="ECO:0000312" key="5">
    <source>
        <dbReference type="EMBL" id="AAL20639.1"/>
    </source>
</evidence>
<feature type="chain" id="PRO_0000065640" description="5'-3' exoribonuclease Rnm">
    <location>
        <begin position="1"/>
        <end position="293"/>
    </location>
</feature>
<feature type="binding site" evidence="2">
    <location>
        <position position="17"/>
    </location>
    <ligand>
        <name>Mn(2+)</name>
        <dbReference type="ChEBI" id="CHEBI:29035"/>
        <label>1</label>
    </ligand>
</feature>
<feature type="binding site" evidence="2">
    <location>
        <position position="19"/>
    </location>
    <ligand>
        <name>Mn(2+)</name>
        <dbReference type="ChEBI" id="CHEBI:29035"/>
        <label>1</label>
    </ligand>
</feature>
<feature type="binding site" evidence="2">
    <location>
        <position position="24"/>
    </location>
    <ligand>
        <name>Mn(2+)</name>
        <dbReference type="ChEBI" id="CHEBI:29035"/>
        <label>2</label>
    </ligand>
</feature>
<feature type="binding site" evidence="2">
    <location>
        <position position="49"/>
    </location>
    <ligand>
        <name>Mn(2+)</name>
        <dbReference type="ChEBI" id="CHEBI:29035"/>
        <label>2</label>
    </ligand>
</feature>
<feature type="binding site" evidence="2">
    <location>
        <position position="76"/>
    </location>
    <ligand>
        <name>Mn(2+)</name>
        <dbReference type="ChEBI" id="CHEBI:29035"/>
        <label>1</label>
    </ligand>
</feature>
<feature type="binding site" evidence="2">
    <location>
        <position position="76"/>
    </location>
    <ligand>
        <name>Mn(2+)</name>
        <dbReference type="ChEBI" id="CHEBI:29035"/>
        <label>3</label>
    </ligand>
</feature>
<feature type="binding site" evidence="2">
    <location>
        <position position="87"/>
    </location>
    <ligand>
        <name>Mn(2+)</name>
        <dbReference type="ChEBI" id="CHEBI:29035"/>
        <label>3</label>
    </ligand>
</feature>
<feature type="binding site" evidence="2">
    <location>
        <position position="202"/>
    </location>
    <ligand>
        <name>Mn(2+)</name>
        <dbReference type="ChEBI" id="CHEBI:29035"/>
        <label>3</label>
    </ligand>
</feature>
<feature type="binding site" evidence="2">
    <location>
        <position position="259"/>
    </location>
    <ligand>
        <name>Mn(2+)</name>
        <dbReference type="ChEBI" id="CHEBI:29035"/>
        <label>1</label>
    </ligand>
</feature>
<feature type="binding site" evidence="2">
    <location>
        <position position="261"/>
    </location>
    <ligand>
        <name>Mn(2+)</name>
        <dbReference type="ChEBI" id="CHEBI:29035"/>
        <label>2</label>
    </ligand>
</feature>
<comment type="function">
    <text evidence="1">Exoribonuclease that catalyzes the last steps of 5S, 16S and 23S rRNA 5'-end maturation. Removes 3 nucleotides (nt) from the 5' end of 5S, 16S and 23S rRNA precursors to generate the mature 5' ends. 5S and 23S rRNA maturation occurs more efficiently and accurately on ribosomal particles as compared to free RNA. Efficiently catalyzes the hydrolysis of the 3'-phosphate from 3',5'-bis-phosphonucleotides as well as the successive hydrolysis of 5'-phosphomononucleotides from the 5'-end of short pieces of RNA and DNA, with no specificity toward the identity of the nucleotide base. Is more efficient at hydrolyzing RNA oligonucleotides than DNA oligonucleotides. This enzyme can also hydrolyze annealed DNA duplexes, albeit at a catalytic efficiency lower than that of the corresponding single-stranded oligonucleotides.</text>
</comment>
<comment type="catalytic activity">
    <reaction evidence="1">
        <text>a ribonucleoside 3',5'-bisphosphate + H2O = a ribonucleoside 5'-phosphate + phosphate</text>
        <dbReference type="Rhea" id="RHEA:43532"/>
        <dbReference type="ChEBI" id="CHEBI:15377"/>
        <dbReference type="ChEBI" id="CHEBI:43474"/>
        <dbReference type="ChEBI" id="CHEBI:58043"/>
        <dbReference type="ChEBI" id="CHEBI:83402"/>
        <dbReference type="EC" id="3.1.3.97"/>
    </reaction>
</comment>
<comment type="cofactor">
    <cofactor evidence="1">
        <name>Mn(2+)</name>
        <dbReference type="ChEBI" id="CHEBI:29035"/>
    </cofactor>
</comment>
<comment type="similarity">
    <text evidence="3">Belongs to the PHP family. TrpH/YciV subfamily.</text>
</comment>
<comment type="sequence caution" evidence="3">
    <conflict type="erroneous initiation">
        <sequence resource="EMBL-CDS" id="AAB93886"/>
    </conflict>
    <text>Truncated N-terminus.</text>
</comment>
<protein>
    <recommendedName>
        <fullName evidence="1">5'-3' exoribonuclease Rnm</fullName>
        <ecNumber evidence="1">3.1.13.-</ecNumber>
    </recommendedName>
    <alternativeName>
        <fullName evidence="1">3',5'-nucleotide bisphosphate phosphatase</fullName>
        <ecNumber evidence="1">3.1.3.97</ecNumber>
    </alternativeName>
    <alternativeName>
        <fullName evidence="1">RNase AM</fullName>
    </alternativeName>
</protein>
<keyword id="KW-0269">Exonuclease</keyword>
<keyword id="KW-0378">Hydrolase</keyword>
<keyword id="KW-0464">Manganese</keyword>
<keyword id="KW-0479">Metal-binding</keyword>
<keyword id="KW-0540">Nuclease</keyword>
<keyword id="KW-0547">Nucleotide-binding</keyword>
<keyword id="KW-1185">Reference proteome</keyword>
<keyword id="KW-0698">rRNA processing</keyword>